<accession>Q5HCI5</accession>
<dbReference type="EC" id="2.1.1.-" evidence="1"/>
<dbReference type="EMBL" id="CP000046">
    <property type="protein sequence ID" value="AAW37384.1"/>
    <property type="molecule type" value="Genomic_DNA"/>
</dbReference>
<dbReference type="RefSeq" id="WP_000215595.1">
    <property type="nucleotide sequence ID" value="NZ_JBGOFO010000001.1"/>
</dbReference>
<dbReference type="SMR" id="Q5HCI5"/>
<dbReference type="KEGG" id="sac:SACOL2736"/>
<dbReference type="HOGENOM" id="CLU_065341_0_0_9"/>
<dbReference type="Proteomes" id="UP000000530">
    <property type="component" value="Chromosome"/>
</dbReference>
<dbReference type="GO" id="GO:0005829">
    <property type="term" value="C:cytosol"/>
    <property type="evidence" value="ECO:0007669"/>
    <property type="project" value="TreeGrafter"/>
</dbReference>
<dbReference type="GO" id="GO:0070043">
    <property type="term" value="F:rRNA (guanine-N7-)-methyltransferase activity"/>
    <property type="evidence" value="ECO:0007669"/>
    <property type="project" value="UniProtKB-UniRule"/>
</dbReference>
<dbReference type="CDD" id="cd02440">
    <property type="entry name" value="AdoMet_MTases"/>
    <property type="match status" value="1"/>
</dbReference>
<dbReference type="FunFam" id="3.40.50.150:FF:000041">
    <property type="entry name" value="Ribosomal RNA small subunit methyltransferase G"/>
    <property type="match status" value="1"/>
</dbReference>
<dbReference type="Gene3D" id="3.40.50.150">
    <property type="entry name" value="Vaccinia Virus protein VP39"/>
    <property type="match status" value="1"/>
</dbReference>
<dbReference type="HAMAP" id="MF_00074">
    <property type="entry name" value="16SrRNA_methyltr_G"/>
    <property type="match status" value="1"/>
</dbReference>
<dbReference type="InterPro" id="IPR003682">
    <property type="entry name" value="rRNA_ssu_MeTfrase_G"/>
</dbReference>
<dbReference type="InterPro" id="IPR029063">
    <property type="entry name" value="SAM-dependent_MTases_sf"/>
</dbReference>
<dbReference type="NCBIfam" id="TIGR00138">
    <property type="entry name" value="rsmG_gidB"/>
    <property type="match status" value="1"/>
</dbReference>
<dbReference type="PANTHER" id="PTHR31760">
    <property type="entry name" value="S-ADENOSYL-L-METHIONINE-DEPENDENT METHYLTRANSFERASES SUPERFAMILY PROTEIN"/>
    <property type="match status" value="1"/>
</dbReference>
<dbReference type="PANTHER" id="PTHR31760:SF0">
    <property type="entry name" value="S-ADENOSYL-L-METHIONINE-DEPENDENT METHYLTRANSFERASES SUPERFAMILY PROTEIN"/>
    <property type="match status" value="1"/>
</dbReference>
<dbReference type="Pfam" id="PF02527">
    <property type="entry name" value="GidB"/>
    <property type="match status" value="1"/>
</dbReference>
<dbReference type="PIRSF" id="PIRSF003078">
    <property type="entry name" value="GidB"/>
    <property type="match status" value="1"/>
</dbReference>
<dbReference type="SUPFAM" id="SSF53335">
    <property type="entry name" value="S-adenosyl-L-methionine-dependent methyltransferases"/>
    <property type="match status" value="1"/>
</dbReference>
<sequence>MTVEWLAEQLKEHNIQLTETQKQQFQTYYRLLVEWNEKMNLTSITDEHDVYLKHFYDSIAPSFYFDFNQPISICDVGAGAGFPSIPLKIMFPQLKVTIVDSLNKRIQFLNHLASELQLQDVSFIHDRAETFGKGVYRESYDVVTARAVARLSVLSELCLPLVKKGGQFVALKSSKGEEELEEAKFAISVLGGNVTETHTFELPEDAGERQMFIIDKKRQTPKKYPRKPGTPNKTPLLEK</sequence>
<name>RSMG_STAAC</name>
<evidence type="ECO:0000255" key="1">
    <source>
        <dbReference type="HAMAP-Rule" id="MF_00074"/>
    </source>
</evidence>
<evidence type="ECO:0000256" key="2">
    <source>
        <dbReference type="SAM" id="MobiDB-lite"/>
    </source>
</evidence>
<reference key="1">
    <citation type="journal article" date="2005" name="J. Bacteriol.">
        <title>Insights on evolution of virulence and resistance from the complete genome analysis of an early methicillin-resistant Staphylococcus aureus strain and a biofilm-producing methicillin-resistant Staphylococcus epidermidis strain.</title>
        <authorList>
            <person name="Gill S.R."/>
            <person name="Fouts D.E."/>
            <person name="Archer G.L."/>
            <person name="Mongodin E.F."/>
            <person name="DeBoy R.T."/>
            <person name="Ravel J."/>
            <person name="Paulsen I.T."/>
            <person name="Kolonay J.F."/>
            <person name="Brinkac L.M."/>
            <person name="Beanan M.J."/>
            <person name="Dodson R.J."/>
            <person name="Daugherty S.C."/>
            <person name="Madupu R."/>
            <person name="Angiuoli S.V."/>
            <person name="Durkin A.S."/>
            <person name="Haft D.H."/>
            <person name="Vamathevan J.J."/>
            <person name="Khouri H."/>
            <person name="Utterback T.R."/>
            <person name="Lee C."/>
            <person name="Dimitrov G."/>
            <person name="Jiang L."/>
            <person name="Qin H."/>
            <person name="Weidman J."/>
            <person name="Tran K."/>
            <person name="Kang K.H."/>
            <person name="Hance I.R."/>
            <person name="Nelson K.E."/>
            <person name="Fraser C.M."/>
        </authorList>
    </citation>
    <scope>NUCLEOTIDE SEQUENCE [LARGE SCALE GENOMIC DNA]</scope>
    <source>
        <strain>COL</strain>
    </source>
</reference>
<feature type="chain" id="PRO_0000184328" description="Ribosomal RNA small subunit methyltransferase G">
    <location>
        <begin position="1"/>
        <end position="239"/>
    </location>
</feature>
<feature type="region of interest" description="Disordered" evidence="2">
    <location>
        <begin position="215"/>
        <end position="239"/>
    </location>
</feature>
<feature type="binding site" evidence="1">
    <location>
        <position position="77"/>
    </location>
    <ligand>
        <name>S-adenosyl-L-methionine</name>
        <dbReference type="ChEBI" id="CHEBI:59789"/>
    </ligand>
</feature>
<feature type="binding site" evidence="1">
    <location>
        <position position="82"/>
    </location>
    <ligand>
        <name>S-adenosyl-L-methionine</name>
        <dbReference type="ChEBI" id="CHEBI:59789"/>
    </ligand>
</feature>
<feature type="binding site" evidence="1">
    <location>
        <begin position="128"/>
        <end position="129"/>
    </location>
    <ligand>
        <name>S-adenosyl-L-methionine</name>
        <dbReference type="ChEBI" id="CHEBI:59789"/>
    </ligand>
</feature>
<feature type="binding site" evidence="1">
    <location>
        <position position="146"/>
    </location>
    <ligand>
        <name>S-adenosyl-L-methionine</name>
        <dbReference type="ChEBI" id="CHEBI:59789"/>
    </ligand>
</feature>
<comment type="function">
    <text evidence="1">Specifically methylates the N7 position of guanine in position 535 of 16S rRNA.</text>
</comment>
<comment type="subcellular location">
    <subcellularLocation>
        <location evidence="1">Cytoplasm</location>
    </subcellularLocation>
</comment>
<comment type="similarity">
    <text evidence="1">Belongs to the methyltransferase superfamily. RNA methyltransferase RsmG family.</text>
</comment>
<proteinExistence type="inferred from homology"/>
<protein>
    <recommendedName>
        <fullName evidence="1">Ribosomal RNA small subunit methyltransferase G</fullName>
        <ecNumber evidence="1">2.1.1.-</ecNumber>
    </recommendedName>
    <alternativeName>
        <fullName evidence="1">16S rRNA 7-methylguanosine methyltransferase</fullName>
        <shortName evidence="1">16S rRNA m7G methyltransferase</shortName>
    </alternativeName>
</protein>
<gene>
    <name evidence="1" type="primary">rsmG</name>
    <name type="ordered locus">SACOL2736</name>
</gene>
<keyword id="KW-0963">Cytoplasm</keyword>
<keyword id="KW-0489">Methyltransferase</keyword>
<keyword id="KW-0698">rRNA processing</keyword>
<keyword id="KW-0949">S-adenosyl-L-methionine</keyword>
<keyword id="KW-0808">Transferase</keyword>
<organism>
    <name type="scientific">Staphylococcus aureus (strain COL)</name>
    <dbReference type="NCBI Taxonomy" id="93062"/>
    <lineage>
        <taxon>Bacteria</taxon>
        <taxon>Bacillati</taxon>
        <taxon>Bacillota</taxon>
        <taxon>Bacilli</taxon>
        <taxon>Bacillales</taxon>
        <taxon>Staphylococcaceae</taxon>
        <taxon>Staphylococcus</taxon>
    </lineage>
</organism>